<feature type="chain" id="PRO_1000057528" description="Translation initiation factor IF-3">
    <location>
        <begin position="1"/>
        <end position="173"/>
    </location>
</feature>
<keyword id="KW-0963">Cytoplasm</keyword>
<keyword id="KW-0396">Initiation factor</keyword>
<keyword id="KW-0648">Protein biosynthesis</keyword>
<keyword id="KW-1185">Reference proteome</keyword>
<name>IF3_EHRCR</name>
<dbReference type="EMBL" id="CP000236">
    <property type="protein sequence ID" value="ABD45086.1"/>
    <property type="molecule type" value="Genomic_DNA"/>
</dbReference>
<dbReference type="RefSeq" id="WP_011452346.1">
    <property type="nucleotide sequence ID" value="NC_007799.1"/>
</dbReference>
<dbReference type="SMR" id="Q2GI91"/>
<dbReference type="STRING" id="205920.ECH_0007"/>
<dbReference type="KEGG" id="ech:ECH_0007"/>
<dbReference type="eggNOG" id="COG0290">
    <property type="taxonomic scope" value="Bacteria"/>
</dbReference>
<dbReference type="HOGENOM" id="CLU_054919_3_2_5"/>
<dbReference type="OrthoDB" id="9806014at2"/>
<dbReference type="Proteomes" id="UP000008320">
    <property type="component" value="Chromosome"/>
</dbReference>
<dbReference type="GO" id="GO:0005829">
    <property type="term" value="C:cytosol"/>
    <property type="evidence" value="ECO:0007669"/>
    <property type="project" value="TreeGrafter"/>
</dbReference>
<dbReference type="GO" id="GO:0016020">
    <property type="term" value="C:membrane"/>
    <property type="evidence" value="ECO:0007669"/>
    <property type="project" value="TreeGrafter"/>
</dbReference>
<dbReference type="GO" id="GO:0043022">
    <property type="term" value="F:ribosome binding"/>
    <property type="evidence" value="ECO:0007669"/>
    <property type="project" value="TreeGrafter"/>
</dbReference>
<dbReference type="GO" id="GO:0003743">
    <property type="term" value="F:translation initiation factor activity"/>
    <property type="evidence" value="ECO:0007669"/>
    <property type="project" value="UniProtKB-UniRule"/>
</dbReference>
<dbReference type="GO" id="GO:0032790">
    <property type="term" value="P:ribosome disassembly"/>
    <property type="evidence" value="ECO:0007669"/>
    <property type="project" value="TreeGrafter"/>
</dbReference>
<dbReference type="FunFam" id="3.30.110.10:FF:000001">
    <property type="entry name" value="Translation initiation factor IF-3"/>
    <property type="match status" value="1"/>
</dbReference>
<dbReference type="Gene3D" id="3.30.110.10">
    <property type="entry name" value="Translation initiation factor 3 (IF-3), C-terminal domain"/>
    <property type="match status" value="1"/>
</dbReference>
<dbReference type="Gene3D" id="3.10.20.80">
    <property type="entry name" value="Translation initiation factor 3 (IF-3), N-terminal domain"/>
    <property type="match status" value="1"/>
</dbReference>
<dbReference type="HAMAP" id="MF_00080">
    <property type="entry name" value="IF_3"/>
    <property type="match status" value="1"/>
</dbReference>
<dbReference type="InterPro" id="IPR036788">
    <property type="entry name" value="T_IF-3_C_sf"/>
</dbReference>
<dbReference type="InterPro" id="IPR036787">
    <property type="entry name" value="T_IF-3_N_sf"/>
</dbReference>
<dbReference type="InterPro" id="IPR001288">
    <property type="entry name" value="Translation_initiation_fac_3"/>
</dbReference>
<dbReference type="InterPro" id="IPR019815">
    <property type="entry name" value="Translation_initiation_fac_3_C"/>
</dbReference>
<dbReference type="InterPro" id="IPR019814">
    <property type="entry name" value="Translation_initiation_fac_3_N"/>
</dbReference>
<dbReference type="NCBIfam" id="TIGR00168">
    <property type="entry name" value="infC"/>
    <property type="match status" value="1"/>
</dbReference>
<dbReference type="PANTHER" id="PTHR10938">
    <property type="entry name" value="TRANSLATION INITIATION FACTOR IF-3"/>
    <property type="match status" value="1"/>
</dbReference>
<dbReference type="PANTHER" id="PTHR10938:SF0">
    <property type="entry name" value="TRANSLATION INITIATION FACTOR IF-3, MITOCHONDRIAL"/>
    <property type="match status" value="1"/>
</dbReference>
<dbReference type="Pfam" id="PF00707">
    <property type="entry name" value="IF3_C"/>
    <property type="match status" value="1"/>
</dbReference>
<dbReference type="Pfam" id="PF05198">
    <property type="entry name" value="IF3_N"/>
    <property type="match status" value="1"/>
</dbReference>
<dbReference type="SUPFAM" id="SSF55200">
    <property type="entry name" value="Translation initiation factor IF3, C-terminal domain"/>
    <property type="match status" value="1"/>
</dbReference>
<dbReference type="SUPFAM" id="SSF54364">
    <property type="entry name" value="Translation initiation factor IF3, N-terminal domain"/>
    <property type="match status" value="1"/>
</dbReference>
<protein>
    <recommendedName>
        <fullName evidence="1">Translation initiation factor IF-3</fullName>
    </recommendedName>
</protein>
<reference key="1">
    <citation type="journal article" date="2006" name="PLoS Genet.">
        <title>Comparative genomics of emerging human ehrlichiosis agents.</title>
        <authorList>
            <person name="Dunning Hotopp J.C."/>
            <person name="Lin M."/>
            <person name="Madupu R."/>
            <person name="Crabtree J."/>
            <person name="Angiuoli S.V."/>
            <person name="Eisen J.A."/>
            <person name="Seshadri R."/>
            <person name="Ren Q."/>
            <person name="Wu M."/>
            <person name="Utterback T.R."/>
            <person name="Smith S."/>
            <person name="Lewis M."/>
            <person name="Khouri H."/>
            <person name="Zhang C."/>
            <person name="Niu H."/>
            <person name="Lin Q."/>
            <person name="Ohashi N."/>
            <person name="Zhi N."/>
            <person name="Nelson W.C."/>
            <person name="Brinkac L.M."/>
            <person name="Dodson R.J."/>
            <person name="Rosovitz M.J."/>
            <person name="Sundaram J.P."/>
            <person name="Daugherty S.C."/>
            <person name="Davidsen T."/>
            <person name="Durkin A.S."/>
            <person name="Gwinn M.L."/>
            <person name="Haft D.H."/>
            <person name="Selengut J.D."/>
            <person name="Sullivan S.A."/>
            <person name="Zafar N."/>
            <person name="Zhou L."/>
            <person name="Benahmed F."/>
            <person name="Forberger H."/>
            <person name="Halpin R."/>
            <person name="Mulligan S."/>
            <person name="Robinson J."/>
            <person name="White O."/>
            <person name="Rikihisa Y."/>
            <person name="Tettelin H."/>
        </authorList>
    </citation>
    <scope>NUCLEOTIDE SEQUENCE [LARGE SCALE GENOMIC DNA]</scope>
    <source>
        <strain>ATCC CRL-10679 / Arkansas</strain>
    </source>
</reference>
<comment type="function">
    <text evidence="1">IF-3 binds to the 30S ribosomal subunit and shifts the equilibrium between 70S ribosomes and their 50S and 30S subunits in favor of the free subunits, thus enhancing the availability of 30S subunits on which protein synthesis initiation begins.</text>
</comment>
<comment type="subunit">
    <text evidence="1">Monomer.</text>
</comment>
<comment type="subcellular location">
    <subcellularLocation>
        <location evidence="1">Cytoplasm</location>
    </subcellularLocation>
</comment>
<comment type="similarity">
    <text evidence="1">Belongs to the IF-3 family.</text>
</comment>
<sequence>MKTKKFSNKNKINEMITAKKVKLVDQNSVMIGVVDIEEALSRAKAVNLDLVEIVHDDQYPLCKIFDYSKYRYSHKKKISDSKKKQKTIIVKELKFKLNIGDNDYNVKLNMLRGFIERGDKVKISLRFIGREILHPEVGMEIIERLIRDTADIAKPENLPKKEGNIINMVLTAK</sequence>
<accession>Q2GI91</accession>
<organism>
    <name type="scientific">Ehrlichia chaffeensis (strain ATCC CRL-10679 / Arkansas)</name>
    <dbReference type="NCBI Taxonomy" id="205920"/>
    <lineage>
        <taxon>Bacteria</taxon>
        <taxon>Pseudomonadati</taxon>
        <taxon>Pseudomonadota</taxon>
        <taxon>Alphaproteobacteria</taxon>
        <taxon>Rickettsiales</taxon>
        <taxon>Anaplasmataceae</taxon>
        <taxon>Ehrlichia</taxon>
    </lineage>
</organism>
<evidence type="ECO:0000255" key="1">
    <source>
        <dbReference type="HAMAP-Rule" id="MF_00080"/>
    </source>
</evidence>
<gene>
    <name evidence="1" type="primary">infC</name>
    <name type="ordered locus">ECH_0007</name>
</gene>
<proteinExistence type="inferred from homology"/>